<sequence>MAEKQTAKRNRREEILQSLALMLESSDGSQRITTAKLAASVGVSEAALYRHFPSKTRMFDSLIEFIEDSLITRINLILKDEKDTTARLRLIVLLLLGFGERNPGLTRILTGHALMFEQDRLQGRINQLFERIEAQLRQVLREKRMREGEGYTTDETLLASQLLAFCEGMLSRFVRSEFKYRPTDDFDARWPLIAAQLQ</sequence>
<feature type="chain" id="PRO_1000188390" description="Nucleoid occlusion factor SlmA">
    <location>
        <begin position="1"/>
        <end position="198"/>
    </location>
</feature>
<feature type="domain" description="HTH tetR-type" evidence="1">
    <location>
        <begin position="10"/>
        <end position="70"/>
    </location>
</feature>
<feature type="DNA-binding region" description="H-T-H motif" evidence="1">
    <location>
        <begin position="33"/>
        <end position="52"/>
    </location>
</feature>
<feature type="coiled-coil region" evidence="1">
    <location>
        <begin position="117"/>
        <end position="144"/>
    </location>
</feature>
<comment type="function">
    <text evidence="1">Required for nucleoid occlusion (NO) phenomenon, which prevents Z-ring formation and cell division over the nucleoid. Acts as a DNA-associated cell division inhibitor that binds simultaneously chromosomal DNA and FtsZ, and disrupts the assembly of FtsZ polymers. SlmA-DNA-binding sequences (SBS) are dispersed on non-Ter regions of the chromosome, preventing FtsZ polymerization at these regions.</text>
</comment>
<comment type="subunit">
    <text evidence="1">Homodimer. Interacts with FtsZ.</text>
</comment>
<comment type="subcellular location">
    <subcellularLocation>
        <location evidence="1">Cytoplasm</location>
        <location evidence="1">Nucleoid</location>
    </subcellularLocation>
</comment>
<comment type="similarity">
    <text evidence="1">Belongs to the nucleoid occlusion factor SlmA family.</text>
</comment>
<name>SLMA_ESCF3</name>
<accession>B7LVK2</accession>
<keyword id="KW-0131">Cell cycle</keyword>
<keyword id="KW-0132">Cell division</keyword>
<keyword id="KW-0175">Coiled coil</keyword>
<keyword id="KW-0963">Cytoplasm</keyword>
<keyword id="KW-0238">DNA-binding</keyword>
<gene>
    <name evidence="1" type="primary">slmA</name>
    <name type="ordered locus">EFER_3932</name>
</gene>
<evidence type="ECO:0000255" key="1">
    <source>
        <dbReference type="HAMAP-Rule" id="MF_01839"/>
    </source>
</evidence>
<organism>
    <name type="scientific">Escherichia fergusonii (strain ATCC 35469 / DSM 13698 / CCUG 18766 / IAM 14443 / JCM 21226 / LMG 7866 / NBRC 102419 / NCTC 12128 / CDC 0568-73)</name>
    <dbReference type="NCBI Taxonomy" id="585054"/>
    <lineage>
        <taxon>Bacteria</taxon>
        <taxon>Pseudomonadati</taxon>
        <taxon>Pseudomonadota</taxon>
        <taxon>Gammaproteobacteria</taxon>
        <taxon>Enterobacterales</taxon>
        <taxon>Enterobacteriaceae</taxon>
        <taxon>Escherichia</taxon>
    </lineage>
</organism>
<protein>
    <recommendedName>
        <fullName evidence="1">Nucleoid occlusion factor SlmA</fullName>
    </recommendedName>
</protein>
<dbReference type="EMBL" id="CU928158">
    <property type="protein sequence ID" value="CAQ91366.1"/>
    <property type="molecule type" value="Genomic_DNA"/>
</dbReference>
<dbReference type="RefSeq" id="WP_000818603.1">
    <property type="nucleotide sequence ID" value="NC_011740.1"/>
</dbReference>
<dbReference type="SMR" id="B7LVK2"/>
<dbReference type="GeneID" id="86944372"/>
<dbReference type="KEGG" id="efe:EFER_3932"/>
<dbReference type="HOGENOM" id="CLU_069356_5_0_6"/>
<dbReference type="OrthoDB" id="9179041at2"/>
<dbReference type="Proteomes" id="UP000000745">
    <property type="component" value="Chromosome"/>
</dbReference>
<dbReference type="GO" id="GO:0043590">
    <property type="term" value="C:bacterial nucleoid"/>
    <property type="evidence" value="ECO:0007669"/>
    <property type="project" value="UniProtKB-UniRule"/>
</dbReference>
<dbReference type="GO" id="GO:0005737">
    <property type="term" value="C:cytoplasm"/>
    <property type="evidence" value="ECO:0007669"/>
    <property type="project" value="UniProtKB-UniRule"/>
</dbReference>
<dbReference type="GO" id="GO:0003700">
    <property type="term" value="F:DNA-binding transcription factor activity"/>
    <property type="evidence" value="ECO:0007669"/>
    <property type="project" value="TreeGrafter"/>
</dbReference>
<dbReference type="GO" id="GO:0000976">
    <property type="term" value="F:transcription cis-regulatory region binding"/>
    <property type="evidence" value="ECO:0007669"/>
    <property type="project" value="TreeGrafter"/>
</dbReference>
<dbReference type="GO" id="GO:0051301">
    <property type="term" value="P:cell division"/>
    <property type="evidence" value="ECO:0007669"/>
    <property type="project" value="UniProtKB-KW"/>
</dbReference>
<dbReference type="GO" id="GO:0010974">
    <property type="term" value="P:negative regulation of division septum assembly"/>
    <property type="evidence" value="ECO:0007669"/>
    <property type="project" value="InterPro"/>
</dbReference>
<dbReference type="FunFam" id="1.10.357.10:FF:000002">
    <property type="entry name" value="Nucleoid occlusion factor SlmA"/>
    <property type="match status" value="1"/>
</dbReference>
<dbReference type="Gene3D" id="1.10.357.10">
    <property type="entry name" value="Tetracycline Repressor, domain 2"/>
    <property type="match status" value="1"/>
</dbReference>
<dbReference type="HAMAP" id="MF_01839">
    <property type="entry name" value="NO_factor_SlmA"/>
    <property type="match status" value="1"/>
</dbReference>
<dbReference type="InterPro" id="IPR023772">
    <property type="entry name" value="DNA-bd_HTH_TetR-type_CS"/>
</dbReference>
<dbReference type="InterPro" id="IPR009057">
    <property type="entry name" value="Homeodomain-like_sf"/>
</dbReference>
<dbReference type="InterPro" id="IPR050109">
    <property type="entry name" value="HTH-type_TetR-like_transc_reg"/>
</dbReference>
<dbReference type="InterPro" id="IPR001647">
    <property type="entry name" value="HTH_TetR"/>
</dbReference>
<dbReference type="InterPro" id="IPR023769">
    <property type="entry name" value="NO_SlmA"/>
</dbReference>
<dbReference type="InterPro" id="IPR054580">
    <property type="entry name" value="SlmA-like_C"/>
</dbReference>
<dbReference type="InterPro" id="IPR036271">
    <property type="entry name" value="Tet_transcr_reg_TetR-rel_C_sf"/>
</dbReference>
<dbReference type="NCBIfam" id="NF007015">
    <property type="entry name" value="PRK09480.1"/>
    <property type="match status" value="1"/>
</dbReference>
<dbReference type="PANTHER" id="PTHR30055">
    <property type="entry name" value="HTH-TYPE TRANSCRIPTIONAL REGULATOR RUTR"/>
    <property type="match status" value="1"/>
</dbReference>
<dbReference type="PANTHER" id="PTHR30055:SF183">
    <property type="entry name" value="NUCLEOID OCCLUSION FACTOR SLMA"/>
    <property type="match status" value="1"/>
</dbReference>
<dbReference type="Pfam" id="PF22276">
    <property type="entry name" value="SlmA-like_C"/>
    <property type="match status" value="1"/>
</dbReference>
<dbReference type="Pfam" id="PF00440">
    <property type="entry name" value="TetR_N"/>
    <property type="match status" value="1"/>
</dbReference>
<dbReference type="SUPFAM" id="SSF46689">
    <property type="entry name" value="Homeodomain-like"/>
    <property type="match status" value="1"/>
</dbReference>
<dbReference type="SUPFAM" id="SSF48498">
    <property type="entry name" value="Tetracyclin repressor-like, C-terminal domain"/>
    <property type="match status" value="1"/>
</dbReference>
<dbReference type="PROSITE" id="PS01081">
    <property type="entry name" value="HTH_TETR_1"/>
    <property type="match status" value="1"/>
</dbReference>
<dbReference type="PROSITE" id="PS50977">
    <property type="entry name" value="HTH_TETR_2"/>
    <property type="match status" value="1"/>
</dbReference>
<reference key="1">
    <citation type="journal article" date="2009" name="PLoS Genet.">
        <title>Organised genome dynamics in the Escherichia coli species results in highly diverse adaptive paths.</title>
        <authorList>
            <person name="Touchon M."/>
            <person name="Hoede C."/>
            <person name="Tenaillon O."/>
            <person name="Barbe V."/>
            <person name="Baeriswyl S."/>
            <person name="Bidet P."/>
            <person name="Bingen E."/>
            <person name="Bonacorsi S."/>
            <person name="Bouchier C."/>
            <person name="Bouvet O."/>
            <person name="Calteau A."/>
            <person name="Chiapello H."/>
            <person name="Clermont O."/>
            <person name="Cruveiller S."/>
            <person name="Danchin A."/>
            <person name="Diard M."/>
            <person name="Dossat C."/>
            <person name="Karoui M.E."/>
            <person name="Frapy E."/>
            <person name="Garry L."/>
            <person name="Ghigo J.M."/>
            <person name="Gilles A.M."/>
            <person name="Johnson J."/>
            <person name="Le Bouguenec C."/>
            <person name="Lescat M."/>
            <person name="Mangenot S."/>
            <person name="Martinez-Jehanne V."/>
            <person name="Matic I."/>
            <person name="Nassif X."/>
            <person name="Oztas S."/>
            <person name="Petit M.A."/>
            <person name="Pichon C."/>
            <person name="Rouy Z."/>
            <person name="Ruf C.S."/>
            <person name="Schneider D."/>
            <person name="Tourret J."/>
            <person name="Vacherie B."/>
            <person name="Vallenet D."/>
            <person name="Medigue C."/>
            <person name="Rocha E.P.C."/>
            <person name="Denamur E."/>
        </authorList>
    </citation>
    <scope>NUCLEOTIDE SEQUENCE [LARGE SCALE GENOMIC DNA]</scope>
    <source>
        <strain>ATCC 35469 / DSM 13698 / BCRC 15582 / CCUG 18766 / IAM 14443 / JCM 21226 / LMG 7866 / NBRC 102419 / NCTC 12128 / CDC 0568-73</strain>
    </source>
</reference>
<proteinExistence type="inferred from homology"/>